<gene>
    <name evidence="1" type="primary">rplQ</name>
    <name type="ordered locus">CKL_0253</name>
</gene>
<name>RL17_CLOK5</name>
<keyword id="KW-1185">Reference proteome</keyword>
<keyword id="KW-0687">Ribonucleoprotein</keyword>
<keyword id="KW-0689">Ribosomal protein</keyword>
<comment type="subunit">
    <text evidence="1">Part of the 50S ribosomal subunit. Contacts protein L32.</text>
</comment>
<comment type="similarity">
    <text evidence="1">Belongs to the bacterial ribosomal protein bL17 family.</text>
</comment>
<dbReference type="EMBL" id="CP000673">
    <property type="protein sequence ID" value="EDK32307.1"/>
    <property type="molecule type" value="Genomic_DNA"/>
</dbReference>
<dbReference type="RefSeq" id="WP_011988832.1">
    <property type="nucleotide sequence ID" value="NC_009706.1"/>
</dbReference>
<dbReference type="SMR" id="A5N4S6"/>
<dbReference type="STRING" id="431943.CKL_0253"/>
<dbReference type="KEGG" id="ckl:CKL_0253"/>
<dbReference type="eggNOG" id="COG0203">
    <property type="taxonomic scope" value="Bacteria"/>
</dbReference>
<dbReference type="HOGENOM" id="CLU_074407_2_2_9"/>
<dbReference type="Proteomes" id="UP000002411">
    <property type="component" value="Chromosome"/>
</dbReference>
<dbReference type="GO" id="GO:0022625">
    <property type="term" value="C:cytosolic large ribosomal subunit"/>
    <property type="evidence" value="ECO:0007669"/>
    <property type="project" value="TreeGrafter"/>
</dbReference>
<dbReference type="GO" id="GO:0003735">
    <property type="term" value="F:structural constituent of ribosome"/>
    <property type="evidence" value="ECO:0007669"/>
    <property type="project" value="InterPro"/>
</dbReference>
<dbReference type="GO" id="GO:0006412">
    <property type="term" value="P:translation"/>
    <property type="evidence" value="ECO:0007669"/>
    <property type="project" value="UniProtKB-UniRule"/>
</dbReference>
<dbReference type="FunFam" id="3.90.1030.10:FF:000001">
    <property type="entry name" value="50S ribosomal protein L17"/>
    <property type="match status" value="1"/>
</dbReference>
<dbReference type="Gene3D" id="3.90.1030.10">
    <property type="entry name" value="Ribosomal protein L17"/>
    <property type="match status" value="1"/>
</dbReference>
<dbReference type="HAMAP" id="MF_01368">
    <property type="entry name" value="Ribosomal_bL17"/>
    <property type="match status" value="1"/>
</dbReference>
<dbReference type="InterPro" id="IPR000456">
    <property type="entry name" value="Ribosomal_bL17"/>
</dbReference>
<dbReference type="InterPro" id="IPR047859">
    <property type="entry name" value="Ribosomal_bL17_CS"/>
</dbReference>
<dbReference type="InterPro" id="IPR036373">
    <property type="entry name" value="Ribosomal_bL17_sf"/>
</dbReference>
<dbReference type="NCBIfam" id="TIGR00059">
    <property type="entry name" value="L17"/>
    <property type="match status" value="1"/>
</dbReference>
<dbReference type="PANTHER" id="PTHR14413:SF16">
    <property type="entry name" value="LARGE RIBOSOMAL SUBUNIT PROTEIN BL17M"/>
    <property type="match status" value="1"/>
</dbReference>
<dbReference type="PANTHER" id="PTHR14413">
    <property type="entry name" value="RIBOSOMAL PROTEIN L17"/>
    <property type="match status" value="1"/>
</dbReference>
<dbReference type="Pfam" id="PF01196">
    <property type="entry name" value="Ribosomal_L17"/>
    <property type="match status" value="1"/>
</dbReference>
<dbReference type="SUPFAM" id="SSF64263">
    <property type="entry name" value="Prokaryotic ribosomal protein L17"/>
    <property type="match status" value="1"/>
</dbReference>
<dbReference type="PROSITE" id="PS01167">
    <property type="entry name" value="RIBOSOMAL_L17"/>
    <property type="match status" value="1"/>
</dbReference>
<evidence type="ECO:0000255" key="1">
    <source>
        <dbReference type="HAMAP-Rule" id="MF_01368"/>
    </source>
</evidence>
<evidence type="ECO:0000305" key="2"/>
<protein>
    <recommendedName>
        <fullName evidence="1">Large ribosomal subunit protein bL17</fullName>
    </recommendedName>
    <alternativeName>
        <fullName evidence="2">50S ribosomal protein L17</fullName>
    </alternativeName>
</protein>
<accession>A5N4S6</accession>
<organism>
    <name type="scientific">Clostridium kluyveri (strain ATCC 8527 / DSM 555 / NBRC 12016 / NCIMB 10680 / K1)</name>
    <dbReference type="NCBI Taxonomy" id="431943"/>
    <lineage>
        <taxon>Bacteria</taxon>
        <taxon>Bacillati</taxon>
        <taxon>Bacillota</taxon>
        <taxon>Clostridia</taxon>
        <taxon>Eubacteriales</taxon>
        <taxon>Clostridiaceae</taxon>
        <taxon>Clostridium</taxon>
    </lineage>
</organism>
<feature type="chain" id="PRO_1000087166" description="Large ribosomal subunit protein bL17">
    <location>
        <begin position="1"/>
        <end position="113"/>
    </location>
</feature>
<sequence length="113" mass="12871">MAQHRKLGLPSDHRRAMLRNLVTSFLKHGKIQTTVTRAKEARSLAEKMITLAKRGDLHARRQVLSFVTEEEVVKNLFTNIAPKYAERNGGYTRMYKIGPRRGDGAELVILELV</sequence>
<proteinExistence type="inferred from homology"/>
<reference key="1">
    <citation type="journal article" date="2008" name="Proc. Natl. Acad. Sci. U.S.A.">
        <title>The genome of Clostridium kluyveri, a strict anaerobe with unique metabolic features.</title>
        <authorList>
            <person name="Seedorf H."/>
            <person name="Fricke W.F."/>
            <person name="Veith B."/>
            <person name="Brueggemann H."/>
            <person name="Liesegang H."/>
            <person name="Strittmatter A."/>
            <person name="Miethke M."/>
            <person name="Buckel W."/>
            <person name="Hinderberger J."/>
            <person name="Li F."/>
            <person name="Hagemeier C."/>
            <person name="Thauer R.K."/>
            <person name="Gottschalk G."/>
        </authorList>
    </citation>
    <scope>NUCLEOTIDE SEQUENCE [LARGE SCALE GENOMIC DNA]</scope>
    <source>
        <strain>ATCC 8527 / DSM 555 / NBRC 12016 / NCIMB 10680 / K1</strain>
    </source>
</reference>